<dbReference type="EC" id="3.2.2.27" evidence="1"/>
<dbReference type="EMBL" id="AM884177">
    <property type="protein sequence ID" value="CAP07262.1"/>
    <property type="molecule type" value="Genomic_DNA"/>
</dbReference>
<dbReference type="RefSeq" id="WP_009873171.1">
    <property type="nucleotide sequence ID" value="NC_010280.2"/>
</dbReference>
<dbReference type="SMR" id="B0BA61"/>
<dbReference type="KEGG" id="ctl:CTLon_0865"/>
<dbReference type="HOGENOM" id="CLU_032162_3_0_0"/>
<dbReference type="Proteomes" id="UP001154401">
    <property type="component" value="Chromosome"/>
</dbReference>
<dbReference type="GO" id="GO:0005737">
    <property type="term" value="C:cytoplasm"/>
    <property type="evidence" value="ECO:0007669"/>
    <property type="project" value="UniProtKB-SubCell"/>
</dbReference>
<dbReference type="GO" id="GO:0004844">
    <property type="term" value="F:uracil DNA N-glycosylase activity"/>
    <property type="evidence" value="ECO:0007669"/>
    <property type="project" value="UniProtKB-UniRule"/>
</dbReference>
<dbReference type="GO" id="GO:0097510">
    <property type="term" value="P:base-excision repair, AP site formation via deaminated base removal"/>
    <property type="evidence" value="ECO:0007669"/>
    <property type="project" value="TreeGrafter"/>
</dbReference>
<dbReference type="CDD" id="cd10027">
    <property type="entry name" value="UDG-F1-like"/>
    <property type="match status" value="1"/>
</dbReference>
<dbReference type="FunFam" id="3.40.470.10:FF:000008">
    <property type="entry name" value="Uracil-DNA glycosylase"/>
    <property type="match status" value="1"/>
</dbReference>
<dbReference type="Gene3D" id="3.40.470.10">
    <property type="entry name" value="Uracil-DNA glycosylase-like domain"/>
    <property type="match status" value="1"/>
</dbReference>
<dbReference type="HAMAP" id="MF_00148">
    <property type="entry name" value="UDG"/>
    <property type="match status" value="1"/>
</dbReference>
<dbReference type="InterPro" id="IPR002043">
    <property type="entry name" value="UDG_fam1"/>
</dbReference>
<dbReference type="InterPro" id="IPR018085">
    <property type="entry name" value="Ura-DNA_Glyclase_AS"/>
</dbReference>
<dbReference type="InterPro" id="IPR005122">
    <property type="entry name" value="Uracil-DNA_glycosylase-like"/>
</dbReference>
<dbReference type="InterPro" id="IPR036895">
    <property type="entry name" value="Uracil-DNA_glycosylase-like_sf"/>
</dbReference>
<dbReference type="NCBIfam" id="NF003588">
    <property type="entry name" value="PRK05254.1-1"/>
    <property type="match status" value="1"/>
</dbReference>
<dbReference type="NCBIfam" id="NF003589">
    <property type="entry name" value="PRK05254.1-2"/>
    <property type="match status" value="1"/>
</dbReference>
<dbReference type="NCBIfam" id="NF003591">
    <property type="entry name" value="PRK05254.1-4"/>
    <property type="match status" value="1"/>
</dbReference>
<dbReference type="NCBIfam" id="NF003592">
    <property type="entry name" value="PRK05254.1-5"/>
    <property type="match status" value="1"/>
</dbReference>
<dbReference type="NCBIfam" id="TIGR00628">
    <property type="entry name" value="ung"/>
    <property type="match status" value="1"/>
</dbReference>
<dbReference type="PANTHER" id="PTHR11264">
    <property type="entry name" value="URACIL-DNA GLYCOSYLASE"/>
    <property type="match status" value="1"/>
</dbReference>
<dbReference type="PANTHER" id="PTHR11264:SF0">
    <property type="entry name" value="URACIL-DNA GLYCOSYLASE"/>
    <property type="match status" value="1"/>
</dbReference>
<dbReference type="Pfam" id="PF03167">
    <property type="entry name" value="UDG"/>
    <property type="match status" value="1"/>
</dbReference>
<dbReference type="SMART" id="SM00986">
    <property type="entry name" value="UDG"/>
    <property type="match status" value="1"/>
</dbReference>
<dbReference type="SMART" id="SM00987">
    <property type="entry name" value="UreE_C"/>
    <property type="match status" value="1"/>
</dbReference>
<dbReference type="SUPFAM" id="SSF52141">
    <property type="entry name" value="Uracil-DNA glycosylase-like"/>
    <property type="match status" value="1"/>
</dbReference>
<dbReference type="PROSITE" id="PS00130">
    <property type="entry name" value="U_DNA_GLYCOSYLASE"/>
    <property type="match status" value="1"/>
</dbReference>
<sequence>MHEAFTIEQLPPSWQEQLKDEWSQPYWSQLLAFLKSEYAQAKIYPKKENIFAALRSTPFDQVRVVILGQDPYHGEGQAHGLSFSVPRGQALPPSLRNIFQELHTDLGIRNESGCLQAWADQGVLLLNTVLTVRAGEAFSHAGRGWERFTDAIVTKLIQNRTHVIFVLWGNAARQKCNLLFQTKHQHAVLACPHPSPLAAHRGFFGCCHFSKINYLLKKQGKTMINWKIE</sequence>
<accession>B0BA61</accession>
<name>UNG_CHLTB</name>
<protein>
    <recommendedName>
        <fullName evidence="1">Uracil-DNA glycosylase</fullName>
        <shortName evidence="1">UDG</shortName>
        <ecNumber evidence="1">3.2.2.27</ecNumber>
    </recommendedName>
</protein>
<keyword id="KW-0963">Cytoplasm</keyword>
<keyword id="KW-0227">DNA damage</keyword>
<keyword id="KW-0234">DNA repair</keyword>
<keyword id="KW-0378">Hydrolase</keyword>
<evidence type="ECO:0000255" key="1">
    <source>
        <dbReference type="HAMAP-Rule" id="MF_00148"/>
    </source>
</evidence>
<organism>
    <name type="scientific">Chlamydia trachomatis serovar L2b (strain UCH-1/proctitis)</name>
    <dbReference type="NCBI Taxonomy" id="471473"/>
    <lineage>
        <taxon>Bacteria</taxon>
        <taxon>Pseudomonadati</taxon>
        <taxon>Chlamydiota</taxon>
        <taxon>Chlamydiia</taxon>
        <taxon>Chlamydiales</taxon>
        <taxon>Chlamydiaceae</taxon>
        <taxon>Chlamydia/Chlamydophila group</taxon>
        <taxon>Chlamydia</taxon>
    </lineage>
</organism>
<proteinExistence type="inferred from homology"/>
<gene>
    <name evidence="1" type="primary">ung</name>
    <name type="ordered locus">CTLon_0865</name>
</gene>
<reference key="1">
    <citation type="journal article" date="2008" name="Genome Res.">
        <title>Chlamydia trachomatis: genome sequence analysis of lymphogranuloma venereum isolates.</title>
        <authorList>
            <person name="Thomson N.R."/>
            <person name="Holden M.T.G."/>
            <person name="Carder C."/>
            <person name="Lennard N."/>
            <person name="Lockey S.J."/>
            <person name="Marsh P."/>
            <person name="Skipp P."/>
            <person name="O'Connor C.D."/>
            <person name="Goodhead I."/>
            <person name="Norbertzcak H."/>
            <person name="Harris B."/>
            <person name="Ormond D."/>
            <person name="Rance R."/>
            <person name="Quail M.A."/>
            <person name="Parkhill J."/>
            <person name="Stephens R.S."/>
            <person name="Clarke I.N."/>
        </authorList>
    </citation>
    <scope>NUCLEOTIDE SEQUENCE [LARGE SCALE GENOMIC DNA]</scope>
    <source>
        <strain>UCH-1/proctitis</strain>
    </source>
</reference>
<feature type="chain" id="PRO_1000096571" description="Uracil-DNA glycosylase">
    <location>
        <begin position="1"/>
        <end position="229"/>
    </location>
</feature>
<feature type="active site" description="Proton acceptor" evidence="1">
    <location>
        <position position="70"/>
    </location>
</feature>
<comment type="function">
    <text evidence="1">Excises uracil residues from the DNA which can arise as a result of misincorporation of dUMP residues by DNA polymerase or due to deamination of cytosine.</text>
</comment>
<comment type="catalytic activity">
    <reaction evidence="1">
        <text>Hydrolyzes single-stranded DNA or mismatched double-stranded DNA and polynucleotides, releasing free uracil.</text>
        <dbReference type="EC" id="3.2.2.27"/>
    </reaction>
</comment>
<comment type="subcellular location">
    <subcellularLocation>
        <location evidence="1">Cytoplasm</location>
    </subcellularLocation>
</comment>
<comment type="similarity">
    <text evidence="1">Belongs to the uracil-DNA glycosylase (UDG) superfamily. UNG family.</text>
</comment>